<sequence>MAPSRKFFVGGNWKMNGRKQSLGELIGTLNAAKVPADTEVVCAPPTAYIDFARQKLDPKIAVAAQNCYKVTNGAFTGEISPGMIKDCGATWVVLGHSERRHVFGESDELIGQKVAHALAEGLGVIACIGEKLDEREAGITEKVVFEQTKVIADNVKDWSKVVLAYEPVWAIGTGKTATPQQAQEVHEKLRGWLKSNVSDAVAQSTRIIYGGSVTGATCKELASQPDVDGFLVGGASLKPEFVDIINAKQ</sequence>
<name>TPIS_HUMAN</name>
<gene>
    <name type="primary">TPI1</name>
    <name type="synonym">TPI</name>
</gene>
<reference key="1">
    <citation type="journal article" date="1985" name="J. Biol. Chem.">
        <title>Human triosephosphate isomerase cDNA and protein structure. Studies of triosephosphate isomerase deficiency in man.</title>
        <authorList>
            <person name="Maquat L.E."/>
            <person name="Chilcote R."/>
            <person name="Ryan P.M."/>
        </authorList>
    </citation>
    <scope>NUCLEOTIDE SEQUENCE [MRNA] (ISOFORM 1)</scope>
</reference>
<reference key="2">
    <citation type="journal article" date="1985" name="Mol. Cell. Biol.">
        <title>Characterization of the functional gene and several processed pseudogenes in the human triosephosphate isomerase gene family.</title>
        <authorList>
            <person name="Brown J.R."/>
            <person name="Daar I.O."/>
            <person name="Krug J.R."/>
            <person name="Maquat L.E."/>
        </authorList>
    </citation>
    <scope>NUCLEOTIDE SEQUENCE [GENOMIC DNA]</scope>
</reference>
<reference key="3">
    <citation type="journal article" date="1996" name="Genome Res.">
        <title>A gene-rich cluster between the CD4 and triosephosphate isomerase genes at human chromosome 12p13.</title>
        <authorList>
            <person name="Ansari-Lari M.A."/>
            <person name="Muzny D.M."/>
            <person name="Lu J."/>
            <person name="Lu F."/>
            <person name="Lilley C.E."/>
            <person name="Spanos S."/>
            <person name="Malley T."/>
            <person name="Gibbs R.A."/>
        </authorList>
    </citation>
    <scope>NUCLEOTIDE SEQUENCE [GENOMIC DNA]</scope>
</reference>
<reference key="4">
    <citation type="journal article" date="1997" name="Genome Res.">
        <title>Large-scale sequencing in human chromosome 12p13: experimental and computational gene structure determination.</title>
        <authorList>
            <person name="Ansari-Lari M.A."/>
            <person name="Shen Y."/>
            <person name="Muzny D.M."/>
            <person name="Lee W."/>
            <person name="Gibbs R.A."/>
        </authorList>
    </citation>
    <scope>NUCLEOTIDE SEQUENCE [GENOMIC DNA]</scope>
</reference>
<reference key="5">
    <citation type="journal article" date="2004" name="Nat. Genet.">
        <title>Complete sequencing and characterization of 21,243 full-length human cDNAs.</title>
        <authorList>
            <person name="Ota T."/>
            <person name="Suzuki Y."/>
            <person name="Nishikawa T."/>
            <person name="Otsuki T."/>
            <person name="Sugiyama T."/>
            <person name="Irie R."/>
            <person name="Wakamatsu A."/>
            <person name="Hayashi K."/>
            <person name="Sato H."/>
            <person name="Nagai K."/>
            <person name="Kimura K."/>
            <person name="Makita H."/>
            <person name="Sekine M."/>
            <person name="Obayashi M."/>
            <person name="Nishi T."/>
            <person name="Shibahara T."/>
            <person name="Tanaka T."/>
            <person name="Ishii S."/>
            <person name="Yamamoto J."/>
            <person name="Saito K."/>
            <person name="Kawai Y."/>
            <person name="Isono Y."/>
            <person name="Nakamura Y."/>
            <person name="Nagahari K."/>
            <person name="Murakami K."/>
            <person name="Yasuda T."/>
            <person name="Iwayanagi T."/>
            <person name="Wagatsuma M."/>
            <person name="Shiratori A."/>
            <person name="Sudo H."/>
            <person name="Hosoiri T."/>
            <person name="Kaku Y."/>
            <person name="Kodaira H."/>
            <person name="Kondo H."/>
            <person name="Sugawara M."/>
            <person name="Takahashi M."/>
            <person name="Kanda K."/>
            <person name="Yokoi T."/>
            <person name="Furuya T."/>
            <person name="Kikkawa E."/>
            <person name="Omura Y."/>
            <person name="Abe K."/>
            <person name="Kamihara K."/>
            <person name="Katsuta N."/>
            <person name="Sato K."/>
            <person name="Tanikawa M."/>
            <person name="Yamazaki M."/>
            <person name="Ninomiya K."/>
            <person name="Ishibashi T."/>
            <person name="Yamashita H."/>
            <person name="Murakawa K."/>
            <person name="Fujimori K."/>
            <person name="Tanai H."/>
            <person name="Kimata M."/>
            <person name="Watanabe M."/>
            <person name="Hiraoka S."/>
            <person name="Chiba Y."/>
            <person name="Ishida S."/>
            <person name="Ono Y."/>
            <person name="Takiguchi S."/>
            <person name="Watanabe S."/>
            <person name="Yosida M."/>
            <person name="Hotuta T."/>
            <person name="Kusano J."/>
            <person name="Kanehori K."/>
            <person name="Takahashi-Fujii A."/>
            <person name="Hara H."/>
            <person name="Tanase T.-O."/>
            <person name="Nomura Y."/>
            <person name="Togiya S."/>
            <person name="Komai F."/>
            <person name="Hara R."/>
            <person name="Takeuchi K."/>
            <person name="Arita M."/>
            <person name="Imose N."/>
            <person name="Musashino K."/>
            <person name="Yuuki H."/>
            <person name="Oshima A."/>
            <person name="Sasaki N."/>
            <person name="Aotsuka S."/>
            <person name="Yoshikawa Y."/>
            <person name="Matsunawa H."/>
            <person name="Ichihara T."/>
            <person name="Shiohata N."/>
            <person name="Sano S."/>
            <person name="Moriya S."/>
            <person name="Momiyama H."/>
            <person name="Satoh N."/>
            <person name="Takami S."/>
            <person name="Terashima Y."/>
            <person name="Suzuki O."/>
            <person name="Nakagawa S."/>
            <person name="Senoh A."/>
            <person name="Mizoguchi H."/>
            <person name="Goto Y."/>
            <person name="Shimizu F."/>
            <person name="Wakebe H."/>
            <person name="Hishigaki H."/>
            <person name="Watanabe T."/>
            <person name="Sugiyama A."/>
            <person name="Takemoto M."/>
            <person name="Kawakami B."/>
            <person name="Yamazaki M."/>
            <person name="Watanabe K."/>
            <person name="Kumagai A."/>
            <person name="Itakura S."/>
            <person name="Fukuzumi Y."/>
            <person name="Fujimori Y."/>
            <person name="Komiyama M."/>
            <person name="Tashiro H."/>
            <person name="Tanigami A."/>
            <person name="Fujiwara T."/>
            <person name="Ono T."/>
            <person name="Yamada K."/>
            <person name="Fujii Y."/>
            <person name="Ozaki K."/>
            <person name="Hirao M."/>
            <person name="Ohmori Y."/>
            <person name="Kawabata A."/>
            <person name="Hikiji T."/>
            <person name="Kobatake N."/>
            <person name="Inagaki H."/>
            <person name="Ikema Y."/>
            <person name="Okamoto S."/>
            <person name="Okitani R."/>
            <person name="Kawakami T."/>
            <person name="Noguchi S."/>
            <person name="Itoh T."/>
            <person name="Shigeta K."/>
            <person name="Senba T."/>
            <person name="Matsumura K."/>
            <person name="Nakajima Y."/>
            <person name="Mizuno T."/>
            <person name="Morinaga M."/>
            <person name="Sasaki M."/>
            <person name="Togashi T."/>
            <person name="Oyama M."/>
            <person name="Hata H."/>
            <person name="Watanabe M."/>
            <person name="Komatsu T."/>
            <person name="Mizushima-Sugano J."/>
            <person name="Satoh T."/>
            <person name="Shirai Y."/>
            <person name="Takahashi Y."/>
            <person name="Nakagawa K."/>
            <person name="Okumura K."/>
            <person name="Nagase T."/>
            <person name="Nomura N."/>
            <person name="Kikuchi H."/>
            <person name="Masuho Y."/>
            <person name="Yamashita R."/>
            <person name="Nakai K."/>
            <person name="Yada T."/>
            <person name="Nakamura Y."/>
            <person name="Ohara O."/>
            <person name="Isogai T."/>
            <person name="Sugano S."/>
        </authorList>
    </citation>
    <scope>NUCLEOTIDE SEQUENCE [LARGE SCALE MRNA] (ISOFORMS 1 AND 3)</scope>
    <source>
        <tissue>Skeletal muscle</tissue>
    </source>
</reference>
<reference key="6">
    <citation type="journal article" date="2006" name="Nature">
        <title>The finished DNA sequence of human chromosome 12.</title>
        <authorList>
            <person name="Scherer S.E."/>
            <person name="Muzny D.M."/>
            <person name="Buhay C.J."/>
            <person name="Chen R."/>
            <person name="Cree A."/>
            <person name="Ding Y."/>
            <person name="Dugan-Rocha S."/>
            <person name="Gill R."/>
            <person name="Gunaratne P."/>
            <person name="Harris R.A."/>
            <person name="Hawes A.C."/>
            <person name="Hernandez J."/>
            <person name="Hodgson A.V."/>
            <person name="Hume J."/>
            <person name="Jackson A."/>
            <person name="Khan Z.M."/>
            <person name="Kovar-Smith C."/>
            <person name="Lewis L.R."/>
            <person name="Lozado R.J."/>
            <person name="Metzker M.L."/>
            <person name="Milosavljevic A."/>
            <person name="Miner G.R."/>
            <person name="Montgomery K.T."/>
            <person name="Morgan M.B."/>
            <person name="Nazareth L.V."/>
            <person name="Scott G."/>
            <person name="Sodergren E."/>
            <person name="Song X.-Z."/>
            <person name="Steffen D."/>
            <person name="Lovering R.C."/>
            <person name="Wheeler D.A."/>
            <person name="Worley K.C."/>
            <person name="Yuan Y."/>
            <person name="Zhang Z."/>
            <person name="Adams C.Q."/>
            <person name="Ansari-Lari M.A."/>
            <person name="Ayele M."/>
            <person name="Brown M.J."/>
            <person name="Chen G."/>
            <person name="Chen Z."/>
            <person name="Clerc-Blankenburg K.P."/>
            <person name="Davis C."/>
            <person name="Delgado O."/>
            <person name="Dinh H.H."/>
            <person name="Draper H."/>
            <person name="Gonzalez-Garay M.L."/>
            <person name="Havlak P."/>
            <person name="Jackson L.R."/>
            <person name="Jacob L.S."/>
            <person name="Kelly S.H."/>
            <person name="Li L."/>
            <person name="Li Z."/>
            <person name="Liu J."/>
            <person name="Liu W."/>
            <person name="Lu J."/>
            <person name="Maheshwari M."/>
            <person name="Nguyen B.-V."/>
            <person name="Okwuonu G.O."/>
            <person name="Pasternak S."/>
            <person name="Perez L.M."/>
            <person name="Plopper F.J.H."/>
            <person name="Santibanez J."/>
            <person name="Shen H."/>
            <person name="Tabor P.E."/>
            <person name="Verduzco D."/>
            <person name="Waldron L."/>
            <person name="Wang Q."/>
            <person name="Williams G.A."/>
            <person name="Zhang J."/>
            <person name="Zhou J."/>
            <person name="Allen C.C."/>
            <person name="Amin A.G."/>
            <person name="Anyalebechi V."/>
            <person name="Bailey M."/>
            <person name="Barbaria J.A."/>
            <person name="Bimage K.E."/>
            <person name="Bryant N.P."/>
            <person name="Burch P.E."/>
            <person name="Burkett C.E."/>
            <person name="Burrell K.L."/>
            <person name="Calderon E."/>
            <person name="Cardenas V."/>
            <person name="Carter K."/>
            <person name="Casias K."/>
            <person name="Cavazos I."/>
            <person name="Cavazos S.R."/>
            <person name="Ceasar H."/>
            <person name="Chacko J."/>
            <person name="Chan S.N."/>
            <person name="Chavez D."/>
            <person name="Christopoulos C."/>
            <person name="Chu J."/>
            <person name="Cockrell R."/>
            <person name="Cox C.D."/>
            <person name="Dang M."/>
            <person name="Dathorne S.R."/>
            <person name="David R."/>
            <person name="Davis C.M."/>
            <person name="Davy-Carroll L."/>
            <person name="Deshazo D.R."/>
            <person name="Donlin J.E."/>
            <person name="D'Souza L."/>
            <person name="Eaves K.A."/>
            <person name="Egan A."/>
            <person name="Emery-Cohen A.J."/>
            <person name="Escotto M."/>
            <person name="Flagg N."/>
            <person name="Forbes L.D."/>
            <person name="Gabisi A.M."/>
            <person name="Garza M."/>
            <person name="Hamilton C."/>
            <person name="Henderson N."/>
            <person name="Hernandez O."/>
            <person name="Hines S."/>
            <person name="Hogues M.E."/>
            <person name="Huang M."/>
            <person name="Idlebird D.G."/>
            <person name="Johnson R."/>
            <person name="Jolivet A."/>
            <person name="Jones S."/>
            <person name="Kagan R."/>
            <person name="King L.M."/>
            <person name="Leal B."/>
            <person name="Lebow H."/>
            <person name="Lee S."/>
            <person name="LeVan J.M."/>
            <person name="Lewis L.C."/>
            <person name="London P."/>
            <person name="Lorensuhewa L.M."/>
            <person name="Loulseged H."/>
            <person name="Lovett D.A."/>
            <person name="Lucier A."/>
            <person name="Lucier R.L."/>
            <person name="Ma J."/>
            <person name="Madu R.C."/>
            <person name="Mapua P."/>
            <person name="Martindale A.D."/>
            <person name="Martinez E."/>
            <person name="Massey E."/>
            <person name="Mawhiney S."/>
            <person name="Meador M.G."/>
            <person name="Mendez S."/>
            <person name="Mercado C."/>
            <person name="Mercado I.C."/>
            <person name="Merritt C.E."/>
            <person name="Miner Z.L."/>
            <person name="Minja E."/>
            <person name="Mitchell T."/>
            <person name="Mohabbat F."/>
            <person name="Mohabbat K."/>
            <person name="Montgomery B."/>
            <person name="Moore N."/>
            <person name="Morris S."/>
            <person name="Munidasa M."/>
            <person name="Ngo R.N."/>
            <person name="Nguyen N.B."/>
            <person name="Nickerson E."/>
            <person name="Nwaokelemeh O.O."/>
            <person name="Nwokenkwo S."/>
            <person name="Obregon M."/>
            <person name="Oguh M."/>
            <person name="Oragunye N."/>
            <person name="Oviedo R.J."/>
            <person name="Parish B.J."/>
            <person name="Parker D.N."/>
            <person name="Parrish J."/>
            <person name="Parks K.L."/>
            <person name="Paul H.A."/>
            <person name="Payton B.A."/>
            <person name="Perez A."/>
            <person name="Perrin W."/>
            <person name="Pickens A."/>
            <person name="Primus E.L."/>
            <person name="Pu L.-L."/>
            <person name="Puazo M."/>
            <person name="Quiles M.M."/>
            <person name="Quiroz J.B."/>
            <person name="Rabata D."/>
            <person name="Reeves K."/>
            <person name="Ruiz S.J."/>
            <person name="Shao H."/>
            <person name="Sisson I."/>
            <person name="Sonaike T."/>
            <person name="Sorelle R.P."/>
            <person name="Sutton A.E."/>
            <person name="Svatek A.F."/>
            <person name="Svetz L.A."/>
            <person name="Tamerisa K.S."/>
            <person name="Taylor T.R."/>
            <person name="Teague B."/>
            <person name="Thomas N."/>
            <person name="Thorn R.D."/>
            <person name="Trejos Z.Y."/>
            <person name="Trevino B.K."/>
            <person name="Ukegbu O.N."/>
            <person name="Urban J.B."/>
            <person name="Vasquez L.I."/>
            <person name="Vera V.A."/>
            <person name="Villasana D.M."/>
            <person name="Wang L."/>
            <person name="Ward-Moore S."/>
            <person name="Warren J.T."/>
            <person name="Wei X."/>
            <person name="White F."/>
            <person name="Williamson A.L."/>
            <person name="Wleczyk R."/>
            <person name="Wooden H.S."/>
            <person name="Wooden S.H."/>
            <person name="Yen J."/>
            <person name="Yoon L."/>
            <person name="Yoon V."/>
            <person name="Zorrilla S.E."/>
            <person name="Nelson D."/>
            <person name="Kucherlapati R."/>
            <person name="Weinstock G."/>
            <person name="Gibbs R.A."/>
        </authorList>
    </citation>
    <scope>NUCLEOTIDE SEQUENCE [LARGE SCALE GENOMIC DNA]</scope>
</reference>
<reference key="7">
    <citation type="submission" date="2005-09" db="EMBL/GenBank/DDBJ databases">
        <authorList>
            <person name="Mural R.J."/>
            <person name="Istrail S."/>
            <person name="Sutton G.G."/>
            <person name="Florea L."/>
            <person name="Halpern A.L."/>
            <person name="Mobarry C.M."/>
            <person name="Lippert R."/>
            <person name="Walenz B."/>
            <person name="Shatkay H."/>
            <person name="Dew I."/>
            <person name="Miller J.R."/>
            <person name="Flanigan M.J."/>
            <person name="Edwards N.J."/>
            <person name="Bolanos R."/>
            <person name="Fasulo D."/>
            <person name="Halldorsson B.V."/>
            <person name="Hannenhalli S."/>
            <person name="Turner R."/>
            <person name="Yooseph S."/>
            <person name="Lu F."/>
            <person name="Nusskern D.R."/>
            <person name="Shue B.C."/>
            <person name="Zheng X.H."/>
            <person name="Zhong F."/>
            <person name="Delcher A.L."/>
            <person name="Huson D.H."/>
            <person name="Kravitz S.A."/>
            <person name="Mouchard L."/>
            <person name="Reinert K."/>
            <person name="Remington K.A."/>
            <person name="Clark A.G."/>
            <person name="Waterman M.S."/>
            <person name="Eichler E.E."/>
            <person name="Adams M.D."/>
            <person name="Hunkapiller M.W."/>
            <person name="Myers E.W."/>
            <person name="Venter J.C."/>
        </authorList>
    </citation>
    <scope>NUCLEOTIDE SEQUENCE [LARGE SCALE GENOMIC DNA]</scope>
</reference>
<reference key="8">
    <citation type="journal article" date="1989" name="J. Biol. Chem.">
        <title>Transcriptional regulatory sequences of the housekeeping gene for human triosephosphate isomerase.</title>
        <authorList>
            <person name="Boyer T.G."/>
            <person name="Krug J.R."/>
            <person name="Maquat L.E."/>
        </authorList>
    </citation>
    <scope>NUCLEOTIDE SEQUENCE [GENOMIC DNA] OF 1-5</scope>
</reference>
<reference key="9">
    <citation type="journal article" date="2004" name="Genome Res.">
        <title>The status, quality, and expansion of the NIH full-length cDNA project: the Mammalian Gene Collection (MGC).</title>
        <authorList>
            <consortium name="The MGC Project Team"/>
        </authorList>
    </citation>
    <scope>NUCLEOTIDE SEQUENCE [LARGE SCALE MRNA] (ISOFORM 1)</scope>
    <source>
        <tissue>Brain</tissue>
        <tissue>Kidney</tissue>
        <tissue>Placenta</tissue>
        <tissue>Prostate</tissue>
        <tissue>Skeletal muscle</tissue>
        <tissue>Skin</tissue>
        <tissue>Uterus</tissue>
    </source>
</reference>
<reference key="10">
    <citation type="submission" date="2004-06" db="EMBL/GenBank/DDBJ databases">
        <title>Cloning of human full open reading frames in Gateway(TM) system entry vector (pDONR201).</title>
        <authorList>
            <person name="Ebert L."/>
            <person name="Schick M."/>
            <person name="Neubert P."/>
            <person name="Schatten R."/>
            <person name="Henze S."/>
            <person name="Korn B."/>
        </authorList>
    </citation>
    <scope>NUCLEOTIDE SEQUENCE [LARGE SCALE MRNA] (ISOFORM 1)</scope>
</reference>
<reference key="11">
    <citation type="journal article" date="1984" name="J. Biol. Chem.">
        <title>Primary structure of human triosephosphate isomerase.</title>
        <authorList>
            <person name="Lu H.S."/>
            <person name="Yuan P.M."/>
            <person name="Gracy R.W."/>
        </authorList>
    </citation>
    <scope>PROTEIN SEQUENCE OF 2-249</scope>
</reference>
<reference key="12">
    <citation type="journal article" date="1997" name="Electrophoresis">
        <title>Two-dimensional electrophoretic analysis of human breast carcinoma proteins: mapping of proteins that bind to the SH3 domain of mixed lineage kinase MLK2.</title>
        <authorList>
            <person name="Rasmussen R.K."/>
            <person name="Ji H."/>
            <person name="Eddes J.S."/>
            <person name="Moritz R.L."/>
            <person name="Reid G.E."/>
            <person name="Simpson R.J."/>
            <person name="Dorow D.S."/>
        </authorList>
    </citation>
    <scope>PROTEIN SEQUENCE OF 2-20</scope>
    <source>
        <tissue>Mammary carcinoma</tissue>
    </source>
</reference>
<reference key="13">
    <citation type="journal article" date="1997" name="Electrophoresis">
        <title>A two-dimensional gel database of human colon carcinoma proteins.</title>
        <authorList>
            <person name="Ji H."/>
            <person name="Reid G.E."/>
            <person name="Moritz R.L."/>
            <person name="Eddes J.S."/>
            <person name="Burgess A.W."/>
            <person name="Simpson R.J."/>
        </authorList>
    </citation>
    <scope>PROTEIN SEQUENCE OF 2-20</scope>
    <source>
        <tissue>Colon carcinoma</tissue>
    </source>
</reference>
<reference key="14">
    <citation type="submission" date="2008-12" db="UniProtKB">
        <authorList>
            <person name="Lubec G."/>
            <person name="Vishwanath V."/>
            <person name="Chen W.-Q."/>
            <person name="Sun Y."/>
        </authorList>
    </citation>
    <scope>PROTEIN SEQUENCE OF 6-14; 56-90; 60-131; 143-156; 161-175 AND 195-219</scope>
    <scope>IDENTIFICATION BY MASS SPECTROMETRY</scope>
    <source>
        <tissue>Brain</tissue>
        <tissue>Cajal-Retzius cell</tissue>
        <tissue>Fetal brain cortex</tissue>
    </source>
</reference>
<reference key="15">
    <citation type="journal article" date="2006" name="Cell">
        <title>Global, in vivo, and site-specific phosphorylation dynamics in signaling networks.</title>
        <authorList>
            <person name="Olsen J.V."/>
            <person name="Blagoev B."/>
            <person name="Gnad F."/>
            <person name="Macek B."/>
            <person name="Kumar C."/>
            <person name="Mortensen P."/>
            <person name="Mann M."/>
        </authorList>
    </citation>
    <scope>PHOSPHORYLATION [LARGE SCALE ANALYSIS] AT SER-21</scope>
    <scope>IDENTIFICATION BY MASS SPECTROMETRY [LARGE SCALE ANALYSIS]</scope>
    <source>
        <tissue>Cervix carcinoma</tissue>
    </source>
</reference>
<reference key="16">
    <citation type="journal article" date="2006" name="Pituitary">
        <title>Phosphoproteomic analysis of the human pituitary.</title>
        <authorList>
            <person name="Beranova-Giorgianni S."/>
            <person name="Zhao Y."/>
            <person name="Desiderio D.M."/>
            <person name="Giorgianni F."/>
        </authorList>
    </citation>
    <scope>PHOSPHORYLATION [LARGE SCALE ANALYSIS] AT SER-21</scope>
    <scope>IDENTIFICATION BY MASS SPECTROMETRY [LARGE SCALE ANALYSIS]</scope>
    <source>
        <tissue>Pituitary</tissue>
    </source>
</reference>
<reference key="17">
    <citation type="journal article" date="2007" name="J. Proteome Res.">
        <title>Improved titanium dioxide enrichment of phosphopeptides from HeLa cells and high confident phosphopeptide identification by cross-validation of MS/MS and MS/MS/MS spectra.</title>
        <authorList>
            <person name="Yu L.R."/>
            <person name="Zhu Z."/>
            <person name="Chan K.C."/>
            <person name="Issaq H.J."/>
            <person name="Dimitrov D.S."/>
            <person name="Veenstra T.D."/>
        </authorList>
    </citation>
    <scope>PHOSPHORYLATION [LARGE SCALE ANALYSIS] AT SER-21</scope>
    <scope>IDENTIFICATION BY MASS SPECTROMETRY [LARGE SCALE ANALYSIS]</scope>
    <source>
        <tissue>Cervix carcinoma</tissue>
    </source>
</reference>
<reference key="18">
    <citation type="journal article" date="2007" name="Mol. Cell. Proteomics">
        <title>Quantitative phosphoproteome profiling of Wnt3a-mediated signaling network: indicating the involvement of ribonucleoside-diphosphate reductase M2 subunit phosphorylation at residue serine 20 in canonical Wnt signal transduction.</title>
        <authorList>
            <person name="Tang L.-Y."/>
            <person name="Deng N."/>
            <person name="Wang L.-S."/>
            <person name="Dai J."/>
            <person name="Wang Z.-L."/>
            <person name="Jiang X.-S."/>
            <person name="Li S.-J."/>
            <person name="Li L."/>
            <person name="Sheng Q.-H."/>
            <person name="Wu D.-Q."/>
            <person name="Li L."/>
            <person name="Zeng R."/>
        </authorList>
    </citation>
    <scope>PHOSPHORYLATION [LARGE SCALE ANALYSIS] AT SER-21</scope>
    <scope>IDENTIFICATION BY MASS SPECTROMETRY [LARGE SCALE ANALYSIS]</scope>
    <source>
        <tissue>Embryonic kidney</tissue>
    </source>
</reference>
<reference key="19">
    <citation type="journal article" date="2008" name="J. Proteome Res.">
        <title>Phosphorylation analysis of primary human T lymphocytes using sequential IMAC and titanium oxide enrichment.</title>
        <authorList>
            <person name="Carrascal M."/>
            <person name="Ovelleiro D."/>
            <person name="Casas V."/>
            <person name="Gay M."/>
            <person name="Abian J."/>
        </authorList>
    </citation>
    <scope>PHOSPHORYLATION [LARGE SCALE ANALYSIS] AT SER-21</scope>
    <scope>IDENTIFICATION BY MASS SPECTROMETRY [LARGE SCALE ANALYSIS]</scope>
    <source>
        <tissue>T-cell</tissue>
    </source>
</reference>
<reference key="20">
    <citation type="journal article" date="2008" name="Proc. Natl. Acad. Sci. U.S.A.">
        <title>A quantitative atlas of mitotic phosphorylation.</title>
        <authorList>
            <person name="Dephoure N."/>
            <person name="Zhou C."/>
            <person name="Villen J."/>
            <person name="Beausoleil S.A."/>
            <person name="Bakalarski C.E."/>
            <person name="Elledge S.J."/>
            <person name="Gygi S.P."/>
        </authorList>
    </citation>
    <scope>PHOSPHORYLATION [LARGE SCALE ANALYSIS] AT SER-21</scope>
    <scope>IDENTIFICATION BY MASS SPECTROMETRY [LARGE SCALE ANALYSIS]</scope>
    <source>
        <tissue>Cervix carcinoma</tissue>
    </source>
</reference>
<reference key="21">
    <citation type="journal article" date="2009" name="Anal. Chem.">
        <title>Lys-N and trypsin cover complementary parts of the phosphoproteome in a refined SCX-based approach.</title>
        <authorList>
            <person name="Gauci S."/>
            <person name="Helbig A.O."/>
            <person name="Slijper M."/>
            <person name="Krijgsveld J."/>
            <person name="Heck A.J."/>
            <person name="Mohammed S."/>
        </authorList>
    </citation>
    <scope>IDENTIFICATION BY MASS SPECTROMETRY [LARGE SCALE ANALYSIS]</scope>
</reference>
<reference key="22">
    <citation type="journal article" date="2009" name="Sci. Signal.">
        <title>Quantitative phosphoproteomic analysis of T cell receptor signaling reveals system-wide modulation of protein-protein interactions.</title>
        <authorList>
            <person name="Mayya V."/>
            <person name="Lundgren D.H."/>
            <person name="Hwang S.-I."/>
            <person name="Rezaul K."/>
            <person name="Wu L."/>
            <person name="Eng J.K."/>
            <person name="Rodionov V."/>
            <person name="Han D.K."/>
        </authorList>
    </citation>
    <scope>PHOSPHORYLATION [LARGE SCALE ANALYSIS] AT SER-21 AND SER-80</scope>
    <scope>IDENTIFICATION BY MASS SPECTROMETRY [LARGE SCALE ANALYSIS]</scope>
    <source>
        <tissue>Leukemic T-cell</tissue>
    </source>
</reference>
<reference key="23">
    <citation type="journal article" date="2009" name="Science">
        <title>Lysine acetylation targets protein complexes and co-regulates major cellular functions.</title>
        <authorList>
            <person name="Choudhary C."/>
            <person name="Kumar C."/>
            <person name="Gnad F."/>
            <person name="Nielsen M.L."/>
            <person name="Rehman M."/>
            <person name="Walther T.C."/>
            <person name="Olsen J.V."/>
            <person name="Mann M."/>
        </authorList>
    </citation>
    <scope>ACETYLATION [LARGE SCALE ANALYSIS] AT LYS-14; LYS-194 AND LYS-238</scope>
    <scope>IDENTIFICATION BY MASS SPECTROMETRY [LARGE SCALE ANALYSIS]</scope>
</reference>
<reference key="24">
    <citation type="journal article" date="2010" name="Sci. Signal.">
        <title>Quantitative phosphoproteomics reveals widespread full phosphorylation site occupancy during mitosis.</title>
        <authorList>
            <person name="Olsen J.V."/>
            <person name="Vermeulen M."/>
            <person name="Santamaria A."/>
            <person name="Kumar C."/>
            <person name="Miller M.L."/>
            <person name="Jensen L.J."/>
            <person name="Gnad F."/>
            <person name="Cox J."/>
            <person name="Jensen T.S."/>
            <person name="Nigg E.A."/>
            <person name="Brunak S."/>
            <person name="Mann M."/>
        </authorList>
    </citation>
    <scope>PHOSPHORYLATION [LARGE SCALE ANALYSIS] AT SER-21</scope>
    <scope>IDENTIFICATION BY MASS SPECTROMETRY [LARGE SCALE ANALYSIS]</scope>
    <source>
        <tissue>Cervix carcinoma</tissue>
    </source>
</reference>
<reference key="25">
    <citation type="journal article" date="2011" name="BMC Syst. Biol.">
        <title>Initial characterization of the human central proteome.</title>
        <authorList>
            <person name="Burkard T.R."/>
            <person name="Planyavsky M."/>
            <person name="Kaupe I."/>
            <person name="Breitwieser F.P."/>
            <person name="Buerckstuemmer T."/>
            <person name="Bennett K.L."/>
            <person name="Superti-Furga G."/>
            <person name="Colinge J."/>
        </authorList>
    </citation>
    <scope>IDENTIFICATION BY MASS SPECTROMETRY [LARGE SCALE ANALYSIS]</scope>
</reference>
<reference key="26">
    <citation type="journal article" date="2011" name="Sci. Signal.">
        <title>System-wide temporal characterization of the proteome and phosphoproteome of human embryonic stem cell differentiation.</title>
        <authorList>
            <person name="Rigbolt K.T."/>
            <person name="Prokhorova T.A."/>
            <person name="Akimov V."/>
            <person name="Henningsen J."/>
            <person name="Johansen P.T."/>
            <person name="Kratchmarova I."/>
            <person name="Kassem M."/>
            <person name="Mann M."/>
            <person name="Olsen J.V."/>
            <person name="Blagoev B."/>
        </authorList>
    </citation>
    <scope>PHOSPHORYLATION [LARGE SCALE ANALYSIS] AT SER-21</scope>
    <scope>IDENTIFICATION BY MASS SPECTROMETRY [LARGE SCALE ANALYSIS]</scope>
</reference>
<reference key="27">
    <citation type="journal article" date="2012" name="J. Proteome Res.">
        <title>Resveratrol-induced changes of the human adipocyte secretion profile.</title>
        <authorList>
            <person name="Rosenow A."/>
            <person name="Noben J.P."/>
            <person name="Jocken J."/>
            <person name="Kallendrusch S."/>
            <person name="Fischer-Posovszky P."/>
            <person name="Mariman E.C."/>
            <person name="Renes J."/>
        </authorList>
    </citation>
    <scope>IDENTIFICATION BY MASS SPECTROMETRY [LARGE SCALE ANALYSIS]</scope>
</reference>
<reference key="28">
    <citation type="journal article" date="2013" name="J. Proteome Res.">
        <title>Toward a comprehensive characterization of a human cancer cell phosphoproteome.</title>
        <authorList>
            <person name="Zhou H."/>
            <person name="Di Palma S."/>
            <person name="Preisinger C."/>
            <person name="Peng M."/>
            <person name="Polat A.N."/>
            <person name="Heck A.J."/>
            <person name="Mohammed S."/>
        </authorList>
    </citation>
    <scope>PHOSPHORYLATION [LARGE SCALE ANALYSIS] AT SER-21; SER-80 AND SER-212</scope>
    <scope>IDENTIFICATION BY MASS SPECTROMETRY [LARGE SCALE ANALYSIS]</scope>
    <source>
        <tissue>Cervix carcinoma</tissue>
        <tissue>Erythroleukemia</tissue>
    </source>
</reference>
<reference key="29">
    <citation type="journal article" date="2014" name="J. Proteomics">
        <title>An enzyme assisted RP-RPLC approach for in-depth analysis of human liver phosphoproteome.</title>
        <authorList>
            <person name="Bian Y."/>
            <person name="Song C."/>
            <person name="Cheng K."/>
            <person name="Dong M."/>
            <person name="Wang F."/>
            <person name="Huang J."/>
            <person name="Sun D."/>
            <person name="Wang L."/>
            <person name="Ye M."/>
            <person name="Zou H."/>
        </authorList>
    </citation>
    <scope>PHOSPHORYLATION [LARGE SCALE ANALYSIS] AT SER-21; SER-212; THR-214 AND SER-223</scope>
    <scope>IDENTIFICATION BY MASS SPECTROMETRY [LARGE SCALE ANALYSIS]</scope>
    <source>
        <tissue>Liver</tissue>
    </source>
</reference>
<reference key="30">
    <citation type="journal article" date="2014" name="Mol. Cell. Proteomics">
        <title>Immunoaffinity enrichment and mass spectrometry analysis of protein methylation.</title>
        <authorList>
            <person name="Guo A."/>
            <person name="Gu H."/>
            <person name="Zhou J."/>
            <person name="Mulhern D."/>
            <person name="Wang Y."/>
            <person name="Lee K.A."/>
            <person name="Yang V."/>
            <person name="Aguiar M."/>
            <person name="Kornhauser J."/>
            <person name="Jia X."/>
            <person name="Ren J."/>
            <person name="Beausoleil S.A."/>
            <person name="Silva J.C."/>
            <person name="Vemulapalli V."/>
            <person name="Bedford M.T."/>
            <person name="Comb M.J."/>
        </authorList>
    </citation>
    <scope>METHYLATION [LARGE SCALE ANALYSIS] AT LYS-194</scope>
    <scope>IDENTIFICATION BY MASS SPECTROMETRY [LARGE SCALE ANALYSIS]</scope>
    <source>
        <tissue>Colon carcinoma</tissue>
    </source>
</reference>
<reference key="31">
    <citation type="journal article" date="2014" name="Proc. Natl. Acad. Sci. U.S.A.">
        <title>Mapping of SUMO sites and analysis of SUMOylation changes induced by external stimuli.</title>
        <authorList>
            <person name="Impens F."/>
            <person name="Radoshevich L."/>
            <person name="Cossart P."/>
            <person name="Ribet D."/>
        </authorList>
    </citation>
    <scope>SUMOYLATION [LARGE SCALE ANALYSIS] AT LYS-142</scope>
    <scope>IDENTIFICATION BY MASS SPECTROMETRY [LARGE SCALE ANALYSIS]</scope>
</reference>
<reference key="32">
    <citation type="journal article" date="2015" name="Proteomics">
        <title>N-terminome analysis of the human mitochondrial proteome.</title>
        <authorList>
            <person name="Vaca Jacome A.S."/>
            <person name="Rabilloud T."/>
            <person name="Schaeffer-Reiss C."/>
            <person name="Rompais M."/>
            <person name="Ayoub D."/>
            <person name="Lane L."/>
            <person name="Bairoch A."/>
            <person name="Van Dorsselaer A."/>
            <person name="Carapito C."/>
        </authorList>
    </citation>
    <scope>IDENTIFICATION BY MASS SPECTROMETRY [LARGE SCALE ANALYSIS]</scope>
</reference>
<reference key="33">
    <citation type="journal article" date="1994" name="Protein Sci.">
        <title>Crystal structure of recombinant human triosephosphate isomerase at 2.8-A resolution. Triosephosphate isomerase-related human genetic disorders and comparison with the trypanosomal enzyme.</title>
        <authorList>
            <person name="Mande S.C."/>
            <person name="Mainfroid V."/>
            <person name="Kalk K.H."/>
            <person name="Goraj K."/>
            <person name="Martial J.A."/>
            <person name="Hol W.G.J."/>
        </authorList>
    </citation>
    <scope>X-RAY CRYSTALLOGRAPHY (2.8 ANGSTROMS) OF 2-249 IN COMPLEX WITH SUBSTRATE ANALOG</scope>
    <scope>HOMODIMERIZATION</scope>
    <scope>ACTIVE SITE</scope>
    <scope>SUBSTRATE BINDING-SITE</scope>
</reference>
<reference key="34">
    <citation type="journal article" date="2005" name="Acta Crystallogr. F">
        <title>Structure of a high-resolution crystal form of human triosephosphate isomerase: improvement of crystals using the gel-tube method.</title>
        <authorList>
            <person name="Kinoshita T."/>
            <person name="Maruki R."/>
            <person name="Warizaya M."/>
            <person name="Nakajima H."/>
            <person name="Nishimura S."/>
        </authorList>
    </citation>
    <scope>X-RAY CRYSTALLOGRAPHY (2.2 ANGSTROMS) OF 2-249</scope>
</reference>
<reference key="35">
    <citation type="journal article" date="2008" name="J. Biol. Chem.">
        <title>Structural basis of human triosephosphate isomerase deficiency: mutation E104D is related to alterations of a conserved water network at the dimer interface.</title>
        <authorList>
            <person name="Rodriguez-Almazan C."/>
            <person name="Arreola R."/>
            <person name="Rodriguez-Larrea D."/>
            <person name="Aguirre-Lopez B."/>
            <person name="de Gomez-Puyou M.T."/>
            <person name="Perez-Montfort R."/>
            <person name="Costas M."/>
            <person name="Gomez-Puyou A."/>
            <person name="Torres-Larios A."/>
        </authorList>
    </citation>
    <scope>X-RAY CRYSTALLOGRAPHY (1.85 ANGSTROMS) OF 39-289 OF MUTANT ASP-105</scope>
    <scope>FUNCTION</scope>
    <scope>SUBUNIT</scope>
    <scope>CHARACTERIZATION OF VARIANT ASP-105</scope>
    <scope>CATALYTIC ACTIVITY</scope>
    <scope>BIOPHYSICOCHEMICAL PROPERTIES</scope>
    <scope>PATHWAY</scope>
</reference>
<reference key="36">
    <citation type="journal article" date="1986" name="Proc. Natl. Acad. Sci. U.S.A.">
        <title>Human triose-phosphate isomerase deficiency: a single amino acid substitution results in a thermolabile enzyme.</title>
        <authorList>
            <person name="Daar I.O."/>
            <person name="Artymiuk P.J."/>
            <person name="Phillips D.C."/>
            <person name="Maquat L.E."/>
        </authorList>
    </citation>
    <scope>VARIANT TPID ASP-105</scope>
</reference>
<reference key="37">
    <citation type="journal article" date="1992" name="Eur. J. Pediatr. Suppl.">
        <title>Relation between genetic defect, altered protein structure, and enzyme function in triose-phosphate isomerase (TPI) deficiency.</title>
        <authorList>
            <person name="Neubauer B.A."/>
            <person name="Pekrun A."/>
            <person name="Eber S.W."/>
            <person name="Lakomek M."/>
            <person name="Schroeter W."/>
        </authorList>
    </citation>
    <scope>VARIANTS TPID ASP-105 AND MET-232</scope>
</reference>
<reference key="38">
    <citation type="journal article" date="1992" name="Hum. Genet.">
        <title>Human triosephosphate isomerase: substitution of Arg for Gly at position 122 in a thermolabile electromorph variant, TPI-Manchester.</title>
        <authorList>
            <person name="Perry B.A."/>
            <person name="Mohrenweiser H.W."/>
        </authorList>
    </citation>
    <scope>VARIANT MANCHESTER ARG-123</scope>
</reference>
<reference key="39">
    <citation type="journal article" date="1993" name="Am. J. Hum. Genet.">
        <title>Human triosephosphate isomerase deficiency resulting from mutation of Phe-240.</title>
        <authorList>
            <person name="Chang M.-L."/>
            <person name="Artymiuk P.J."/>
            <person name="Wu X."/>
            <person name="Hollan S."/>
            <person name="Lammi A."/>
            <person name="Maquat L.E."/>
        </authorList>
    </citation>
    <scope>VARIANT TPID HUNGARY LEU-241</scope>
</reference>
<reference key="40">
    <citation type="journal article" date="1996" name="Am. J. Hum. Genet.">
        <title>Molecular analysis of a series of alleles in humans with reduced activity at the triosephosphate isomerase locus.</title>
        <authorList>
            <person name="Watanabe M."/>
            <person name="Zingg B.C."/>
            <person name="Mohrenweiser H.W."/>
        </authorList>
    </citation>
    <scope>VARIANTS TPID ALA-73; ASP-105 AND MET-155</scope>
</reference>
<reference key="41">
    <citation type="journal article" date="1997" name="Hum. Mutat.">
        <title>Evidence for founder effect of the Glu104Asp substitution and identification of new mutations in triosephosphate isomerase deficiency.</title>
        <authorList>
            <person name="Arya R."/>
            <person name="Lalloz M.R.A."/>
            <person name="Bellingham A.J."/>
            <person name="Layton D.M."/>
        </authorList>
    </citation>
    <scope>VARIANTS TPID TYR-42; ASP-105 AND VAL-171</scope>
</reference>
<organism>
    <name type="scientific">Homo sapiens</name>
    <name type="common">Human</name>
    <dbReference type="NCBI Taxonomy" id="9606"/>
    <lineage>
        <taxon>Eukaryota</taxon>
        <taxon>Metazoa</taxon>
        <taxon>Chordata</taxon>
        <taxon>Craniata</taxon>
        <taxon>Vertebrata</taxon>
        <taxon>Euteleostomi</taxon>
        <taxon>Mammalia</taxon>
        <taxon>Eutheria</taxon>
        <taxon>Euarchontoglires</taxon>
        <taxon>Primates</taxon>
        <taxon>Haplorrhini</taxon>
        <taxon>Catarrhini</taxon>
        <taxon>Hominidae</taxon>
        <taxon>Homo</taxon>
    </lineage>
</organism>
<feature type="initiator methionine" description="Removed">
    <location>
        <position position="1"/>
    </location>
</feature>
<feature type="chain" id="PRO_0000090113" description="Triosephosphate isomerase">
    <location>
        <begin position="2"/>
        <end position="249"/>
    </location>
</feature>
<feature type="active site" description="Electrophile" evidence="4 8">
    <location>
        <position position="96"/>
    </location>
</feature>
<feature type="active site" description="Proton acceptor" evidence="4 8">
    <location>
        <position position="166"/>
    </location>
</feature>
<feature type="binding site" evidence="4 8">
    <location>
        <position position="12"/>
    </location>
    <ligand>
        <name>substrate</name>
    </ligand>
</feature>
<feature type="binding site" evidence="4 8">
    <location>
        <position position="14"/>
    </location>
    <ligand>
        <name>substrate</name>
    </ligand>
</feature>
<feature type="modified residue" description="N6-acetyllysine" evidence="21">
    <location>
        <position position="14"/>
    </location>
</feature>
<feature type="modified residue" description="Phosphoserine" evidence="15 16 17 18 19 20 22 23 24 25 27">
    <location>
        <position position="21"/>
    </location>
</feature>
<feature type="modified residue" description="3'-nitrotyrosine" evidence="2">
    <location>
        <position position="68"/>
    </location>
</feature>
<feature type="modified residue" description="Phosphoserine" evidence="22 25">
    <location>
        <position position="80"/>
    </location>
</feature>
<feature type="modified residue" description="Phosphoserine" evidence="3">
    <location>
        <position position="106"/>
    </location>
</feature>
<feature type="modified residue" description="N6-succinyllysine" evidence="2">
    <location>
        <position position="149"/>
    </location>
</feature>
<feature type="modified residue" description="N6-acetyllysine; alternate" evidence="2">
    <location>
        <position position="156"/>
    </location>
</feature>
<feature type="modified residue" description="N6-succinyllysine; alternate" evidence="2">
    <location>
        <position position="156"/>
    </location>
</feature>
<feature type="modified residue" description="Phosphoserine" evidence="2">
    <location>
        <position position="159"/>
    </location>
</feature>
<feature type="modified residue" description="Phosphothreonine" evidence="2">
    <location>
        <position position="173"/>
    </location>
</feature>
<feature type="modified residue" description="N6-acetyllysine; alternate" evidence="21">
    <location>
        <position position="194"/>
    </location>
</feature>
<feature type="modified residue" description="N6-methyllysine; alternate" evidence="26">
    <location>
        <position position="194"/>
    </location>
</feature>
<feature type="modified residue" description="N6-succinyllysine; alternate" evidence="2">
    <location>
        <position position="194"/>
    </location>
</feature>
<feature type="modified residue" description="Phosphoserine" evidence="3">
    <location>
        <position position="198"/>
    </location>
</feature>
<feature type="modified residue" description="3'-nitrotyrosine" evidence="2">
    <location>
        <position position="209"/>
    </location>
</feature>
<feature type="modified residue" description="Phosphoserine" evidence="25 27">
    <location>
        <position position="212"/>
    </location>
</feature>
<feature type="modified residue" description="Phosphothreonine" evidence="27">
    <location>
        <position position="214"/>
    </location>
</feature>
<feature type="modified residue" description="Phosphoserine" evidence="27">
    <location>
        <position position="223"/>
    </location>
</feature>
<feature type="modified residue" description="N6-acetyllysine" evidence="21">
    <location>
        <position position="238"/>
    </location>
</feature>
<feature type="cross-link" description="Glycyl lysine isopeptide (Lys-Gly) (interchain with G-Cter in SUMO1)" evidence="28">
    <location>
        <position position="142"/>
    </location>
</feature>
<feature type="splice variant" id="VSP_060721" description="In isoform 3." evidence="13">
    <location>
        <begin position="1"/>
        <end position="82"/>
    </location>
</feature>
<feature type="splice variant" id="VSP_060722" description="In isoform 2." evidence="13">
    <original>M</original>
    <variation>MAEDGEEAEFHFAALYISGQWPRLRADTDLQRLGSSAM</variation>
    <location>
        <position position="1"/>
    </location>
</feature>
<feature type="sequence variant" id="VAR_007534" description="In TPID; dbSNP:rs121964848." evidence="11">
    <original>C</original>
    <variation>Y</variation>
    <location>
        <position position="42"/>
    </location>
</feature>
<feature type="sequence variant" id="VAR_007535" description="In TPID." evidence="10">
    <original>G</original>
    <variation>A</variation>
    <location>
        <position position="73"/>
    </location>
</feature>
<feature type="sequence variant" id="VAR_007536" description="In TPID; no effect on triose-phosphate isomerase activity; changed protein homodimerization activity; the homodimer stability is temperature-dependent and affects the triose-phosphate isomerase activity; dbSNP:rs121964845." evidence="6 7 10 11 12">
    <original>E</original>
    <variation>D</variation>
    <location>
        <position position="105"/>
    </location>
</feature>
<feature type="sequence variant" id="VAR_007537" description="In Manchester; thermolabile; dbSNP:rs121964846." evidence="5">
    <original>G</original>
    <variation>R</variation>
    <location>
        <position position="123"/>
    </location>
</feature>
<feature type="sequence variant" id="VAR_007538" description="In TPID; dbSNP:rs188138723." evidence="10">
    <original>V</original>
    <variation>M</variation>
    <location>
        <position position="155"/>
    </location>
</feature>
<feature type="sequence variant" id="VAR_007539" description="In TPID; dbSNP:rs121964849." evidence="11">
    <original>I</original>
    <variation>V</variation>
    <location>
        <position position="171"/>
    </location>
</feature>
<feature type="sequence variant" id="VAR_007540" description="In TPID; dbSNP:rs1555132614." evidence="12">
    <original>V</original>
    <variation>M</variation>
    <location>
        <position position="232"/>
    </location>
</feature>
<feature type="sequence variant" id="VAR_007541" description="In TPID; Hungary; thermolabile; dbSNP:rs121964847." evidence="9">
    <original>F</original>
    <variation>L</variation>
    <location>
        <position position="241"/>
    </location>
</feature>
<feature type="sequence conflict" description="In Ref. 11; AA sequence." evidence="13" ref="11">
    <original>QS</original>
    <variation>KN</variation>
    <location>
        <begin position="20"/>
        <end position="21"/>
    </location>
</feature>
<feature type="sequence conflict" description="In Ref. 11; AA sequence." evidence="13" ref="11">
    <original>G</original>
    <variation>S</variation>
    <location>
        <position position="27"/>
    </location>
</feature>
<feature type="sequence conflict" description="In Ref. 11; AA sequence." evidence="13" ref="11">
    <original>NA</original>
    <variation>QG</variation>
    <location>
        <begin position="30"/>
        <end position="31"/>
    </location>
</feature>
<feature type="sequence conflict" description="In Ref. 11; AA sequence." evidence="13" ref="11">
    <original>AP</original>
    <variation>IG</variation>
    <location>
        <begin position="43"/>
        <end position="44"/>
    </location>
</feature>
<feature type="sequence conflict" description="In Ref. 11; AA sequence." evidence="13" ref="11">
    <original>P</original>
    <variation>Q</variation>
    <location>
        <position position="58"/>
    </location>
</feature>
<feature type="sequence conflict" description="In Ref. 9; AAH17917." evidence="13" ref="9">
    <original>V</original>
    <variation>A</variation>
    <location>
        <position position="155"/>
    </location>
</feature>
<feature type="sequence conflict" description="In Ref. 11; AA sequence." evidence="13" ref="11">
    <original>P</original>
    <variation>N</variation>
    <location>
        <position position="167"/>
    </location>
</feature>
<feature type="sequence conflict" description="In Ref. 11; AA sequence." evidence="13" ref="11">
    <original>I</original>
    <variation>L</variation>
    <location>
        <position position="244"/>
    </location>
</feature>
<feature type="strand" evidence="31">
    <location>
        <begin position="7"/>
        <end position="12"/>
    </location>
</feature>
<feature type="helix" evidence="31">
    <location>
        <begin position="19"/>
        <end position="32"/>
    </location>
</feature>
<feature type="strand" evidence="31">
    <location>
        <begin position="38"/>
        <end position="43"/>
    </location>
</feature>
<feature type="helix" evidence="31">
    <location>
        <begin position="46"/>
        <end position="48"/>
    </location>
</feature>
<feature type="helix" evidence="31">
    <location>
        <begin position="49"/>
        <end position="55"/>
    </location>
</feature>
<feature type="strand" evidence="31">
    <location>
        <begin position="60"/>
        <end position="65"/>
    </location>
</feature>
<feature type="strand" evidence="31">
    <location>
        <begin position="69"/>
        <end position="74"/>
    </location>
</feature>
<feature type="helix" evidence="31">
    <location>
        <begin position="81"/>
        <end position="86"/>
    </location>
</feature>
<feature type="strand" evidence="31">
    <location>
        <begin position="91"/>
        <end position="95"/>
    </location>
</feature>
<feature type="helix" evidence="31">
    <location>
        <begin position="97"/>
        <end position="101"/>
    </location>
</feature>
<feature type="helix" evidence="31">
    <location>
        <begin position="107"/>
        <end position="119"/>
    </location>
</feature>
<feature type="strand" evidence="31">
    <location>
        <begin position="123"/>
        <end position="128"/>
    </location>
</feature>
<feature type="helix" evidence="31">
    <location>
        <begin position="132"/>
        <end position="136"/>
    </location>
</feature>
<feature type="turn" evidence="30">
    <location>
        <begin position="137"/>
        <end position="139"/>
    </location>
</feature>
<feature type="helix" evidence="31">
    <location>
        <begin position="140"/>
        <end position="152"/>
    </location>
</feature>
<feature type="helix" evidence="31">
    <location>
        <begin position="158"/>
        <end position="160"/>
    </location>
</feature>
<feature type="strand" evidence="31">
    <location>
        <begin position="161"/>
        <end position="165"/>
    </location>
</feature>
<feature type="helix" evidence="29">
    <location>
        <begin position="168"/>
        <end position="170"/>
    </location>
</feature>
<feature type="turn" evidence="29">
    <location>
        <begin position="171"/>
        <end position="173"/>
    </location>
</feature>
<feature type="helix" evidence="31">
    <location>
        <begin position="181"/>
        <end position="196"/>
    </location>
</feature>
<feature type="helix" evidence="31">
    <location>
        <begin position="199"/>
        <end position="204"/>
    </location>
</feature>
<feature type="strand" evidence="31">
    <location>
        <begin position="207"/>
        <end position="209"/>
    </location>
</feature>
<feature type="turn" evidence="31">
    <location>
        <begin position="215"/>
        <end position="217"/>
    </location>
</feature>
<feature type="helix" evidence="31">
    <location>
        <begin position="218"/>
        <end position="222"/>
    </location>
</feature>
<feature type="strand" evidence="31">
    <location>
        <begin position="229"/>
        <end position="233"/>
    </location>
</feature>
<feature type="helix" evidence="31">
    <location>
        <begin position="234"/>
        <end position="237"/>
    </location>
</feature>
<feature type="helix" evidence="31">
    <location>
        <begin position="241"/>
        <end position="245"/>
    </location>
</feature>
<feature type="turn" evidence="31">
    <location>
        <begin position="246"/>
        <end position="248"/>
    </location>
</feature>
<keyword id="KW-0002">3D-structure</keyword>
<keyword id="KW-0007">Acetylation</keyword>
<keyword id="KW-0877">Alternative promoter usage</keyword>
<keyword id="KW-0025">Alternative splicing</keyword>
<keyword id="KW-0963">Cytoplasm</keyword>
<keyword id="KW-0903">Direct protein sequencing</keyword>
<keyword id="KW-0225">Disease variant</keyword>
<keyword id="KW-0312">Gluconeogenesis</keyword>
<keyword id="KW-0324">Glycolysis</keyword>
<keyword id="KW-0360">Hereditary hemolytic anemia</keyword>
<keyword id="KW-0413">Isomerase</keyword>
<keyword id="KW-1017">Isopeptide bond</keyword>
<keyword id="KW-0456">Lyase</keyword>
<keyword id="KW-0488">Methylation</keyword>
<keyword id="KW-0944">Nitration</keyword>
<keyword id="KW-0597">Phosphoprotein</keyword>
<keyword id="KW-1267">Proteomics identification</keyword>
<keyword id="KW-1185">Reference proteome</keyword>
<keyword id="KW-0832">Ubl conjugation</keyword>
<dbReference type="EC" id="5.3.1.1" evidence="6"/>
<dbReference type="EC" id="4.2.3.3" evidence="1"/>
<dbReference type="EMBL" id="M10036">
    <property type="protein sequence ID" value="AAB59511.1"/>
    <property type="molecule type" value="mRNA"/>
</dbReference>
<dbReference type="EMBL" id="X69723">
    <property type="protein sequence ID" value="CAA49379.1"/>
    <property type="molecule type" value="Genomic_DNA"/>
</dbReference>
<dbReference type="EMBL" id="AK298809">
    <property type="protein sequence ID" value="BAH12874.1"/>
    <property type="molecule type" value="mRNA"/>
</dbReference>
<dbReference type="EMBL" id="U47924">
    <property type="protein sequence ID" value="AAB51316.1"/>
    <property type="molecule type" value="Genomic_DNA"/>
</dbReference>
<dbReference type="EMBL" id="CH471116">
    <property type="protein sequence ID" value="EAW88722.1"/>
    <property type="molecule type" value="Genomic_DNA"/>
</dbReference>
<dbReference type="EMBL" id="CH471116">
    <property type="protein sequence ID" value="EAW88723.1"/>
    <property type="molecule type" value="Genomic_DNA"/>
</dbReference>
<dbReference type="EMBL" id="J04603">
    <property type="protein sequence ID" value="AAN86636.1"/>
    <property type="molecule type" value="Genomic_DNA"/>
</dbReference>
<dbReference type="EMBL" id="BC007086">
    <property type="protein sequence ID" value="AAH07086.1"/>
    <property type="molecule type" value="mRNA"/>
</dbReference>
<dbReference type="EMBL" id="BC007812">
    <property type="protein sequence ID" value="AAH07812.1"/>
    <property type="molecule type" value="mRNA"/>
</dbReference>
<dbReference type="EMBL" id="BC009329">
    <property type="protein sequence ID" value="AAH09329.1"/>
    <property type="molecule type" value="mRNA"/>
</dbReference>
<dbReference type="EMBL" id="BC011611">
    <property type="protein sequence ID" value="AAH11611.1"/>
    <property type="molecule type" value="mRNA"/>
</dbReference>
<dbReference type="EMBL" id="BC015100">
    <property type="protein sequence ID" value="AAH15100.1"/>
    <property type="molecule type" value="mRNA"/>
</dbReference>
<dbReference type="EMBL" id="BC017165">
    <property type="protein sequence ID" value="AAH17165.1"/>
    <property type="molecule type" value="mRNA"/>
</dbReference>
<dbReference type="EMBL" id="BC017917">
    <property type="protein sequence ID" value="AAH17917.1"/>
    <property type="molecule type" value="mRNA"/>
</dbReference>
<dbReference type="EMBL" id="BC070129">
    <property type="protein sequence ID" value="AAH70129.1"/>
    <property type="status" value="ALT_SEQ"/>
    <property type="molecule type" value="mRNA"/>
</dbReference>
<dbReference type="EMBL" id="AK313282">
    <property type="protein sequence ID" value="BAG36090.1"/>
    <property type="molecule type" value="mRNA"/>
</dbReference>
<dbReference type="EMBL" id="CR541702">
    <property type="protein sequence ID" value="CAG46503.1"/>
    <property type="molecule type" value="mRNA"/>
</dbReference>
<dbReference type="CCDS" id="CCDS53740.1">
    <molecule id="P60174-3"/>
</dbReference>
<dbReference type="CCDS" id="CCDS58206.1">
    <molecule id="P60174-4"/>
</dbReference>
<dbReference type="CCDS" id="CCDS8566.1">
    <molecule id="P60174-1"/>
</dbReference>
<dbReference type="PIR" id="S29743">
    <property type="entry name" value="ISHUT"/>
</dbReference>
<dbReference type="RefSeq" id="NP_000356.1">
    <molecule id="P60174-1"/>
    <property type="nucleotide sequence ID" value="NM_000365.6"/>
</dbReference>
<dbReference type="RefSeq" id="NP_001152759.1">
    <molecule id="P60174-3"/>
    <property type="nucleotide sequence ID" value="NM_001159287.1"/>
</dbReference>
<dbReference type="RefSeq" id="NP_001244955.1">
    <molecule id="P60174-4"/>
    <property type="nucleotide sequence ID" value="NM_001258026.2"/>
</dbReference>
<dbReference type="PDB" id="1HTI">
    <property type="method" value="X-ray"/>
    <property type="resolution" value="2.80 A"/>
    <property type="chains" value="A/B=2-249"/>
</dbReference>
<dbReference type="PDB" id="1KLG">
    <property type="method" value="X-ray"/>
    <property type="resolution" value="2.40 A"/>
    <property type="chains" value="C=23-37"/>
</dbReference>
<dbReference type="PDB" id="1KLU">
    <property type="method" value="X-ray"/>
    <property type="resolution" value="1.93 A"/>
    <property type="chains" value="C=23-37"/>
</dbReference>
<dbReference type="PDB" id="1WYI">
    <property type="method" value="X-ray"/>
    <property type="resolution" value="2.20 A"/>
    <property type="chains" value="A/B=2-249"/>
</dbReference>
<dbReference type="PDB" id="2IAM">
    <property type="method" value="X-ray"/>
    <property type="resolution" value="2.80 A"/>
    <property type="chains" value="P=23-37"/>
</dbReference>
<dbReference type="PDB" id="2IAN">
    <property type="method" value="X-ray"/>
    <property type="resolution" value="2.80 A"/>
    <property type="chains" value="C/H/M/R=23-37"/>
</dbReference>
<dbReference type="PDB" id="2JK2">
    <property type="method" value="X-ray"/>
    <property type="resolution" value="1.70 A"/>
    <property type="chains" value="A/B=2-249"/>
</dbReference>
<dbReference type="PDB" id="2VOM">
    <property type="method" value="X-ray"/>
    <property type="resolution" value="1.85 A"/>
    <property type="chains" value="A/B/C/D=2-249"/>
</dbReference>
<dbReference type="PDB" id="4BR1">
    <property type="method" value="X-ray"/>
    <property type="resolution" value="1.90 A"/>
    <property type="chains" value="A/B=4-249"/>
</dbReference>
<dbReference type="PDB" id="4E41">
    <property type="method" value="X-ray"/>
    <property type="resolution" value="2.60 A"/>
    <property type="chains" value="C/H=23-37"/>
</dbReference>
<dbReference type="PDB" id="4POC">
    <property type="method" value="X-ray"/>
    <property type="resolution" value="1.60 A"/>
    <property type="chains" value="A/B=1-249"/>
</dbReference>
<dbReference type="PDB" id="4POD">
    <property type="method" value="X-ray"/>
    <property type="resolution" value="1.99 A"/>
    <property type="chains" value="A/B=1-249"/>
</dbReference>
<dbReference type="PDB" id="4UNK">
    <property type="method" value="X-ray"/>
    <property type="resolution" value="2.00 A"/>
    <property type="chains" value="A/B=2-249"/>
</dbReference>
<dbReference type="PDB" id="4UNL">
    <property type="method" value="X-ray"/>
    <property type="resolution" value="1.50 A"/>
    <property type="chains" value="A/B=2-249"/>
</dbReference>
<dbReference type="PDB" id="4ZVJ">
    <property type="method" value="X-ray"/>
    <property type="resolution" value="1.70 A"/>
    <property type="chains" value="A/B=1-249"/>
</dbReference>
<dbReference type="PDB" id="6C2G">
    <property type="method" value="X-ray"/>
    <property type="resolution" value="2.30 A"/>
    <property type="chains" value="A/B/C/D=1-249"/>
</dbReference>
<dbReference type="PDB" id="6D43">
    <property type="method" value="X-ray"/>
    <property type="resolution" value="2.04 A"/>
    <property type="chains" value="A/B=4-249"/>
</dbReference>
<dbReference type="PDB" id="6NLH">
    <property type="method" value="X-ray"/>
    <property type="resolution" value="2.20 A"/>
    <property type="chains" value="A/B/C/D/E/F/G/H=5-249"/>
</dbReference>
<dbReference type="PDB" id="6UP1">
    <property type="method" value="X-ray"/>
    <property type="resolution" value="1.83 A"/>
    <property type="chains" value="A/B=1-249"/>
</dbReference>
<dbReference type="PDB" id="6UP5">
    <property type="method" value="X-ray"/>
    <property type="resolution" value="1.92 A"/>
    <property type="chains" value="A/B=1-249"/>
</dbReference>
<dbReference type="PDB" id="6UP8">
    <property type="method" value="X-ray"/>
    <property type="resolution" value="2.00 A"/>
    <property type="chains" value="A/B=1-249"/>
</dbReference>
<dbReference type="PDB" id="6UPF">
    <property type="method" value="X-ray"/>
    <property type="resolution" value="1.65 A"/>
    <property type="chains" value="A/B=1-249"/>
</dbReference>
<dbReference type="PDB" id="7RDE">
    <property type="method" value="X-ray"/>
    <property type="resolution" value="1.31 A"/>
    <property type="chains" value="A/B=1-249"/>
</dbReference>
<dbReference type="PDB" id="7SX1">
    <property type="method" value="X-ray"/>
    <property type="resolution" value="2.23 A"/>
    <property type="chains" value="A/B=1-249"/>
</dbReference>
<dbReference type="PDB" id="7T0Q">
    <property type="method" value="X-ray"/>
    <property type="resolution" value="2.00 A"/>
    <property type="chains" value="A/B=2-249"/>
</dbReference>
<dbReference type="PDB" id="7UXB">
    <property type="method" value="X-ray"/>
    <property type="resolution" value="2.00 A"/>
    <property type="chains" value="A/B=1-249"/>
</dbReference>
<dbReference type="PDB" id="7UXV">
    <property type="method" value="X-ray"/>
    <property type="resolution" value="2.15 A"/>
    <property type="chains" value="A/B=1-249"/>
</dbReference>
<dbReference type="PDB" id="9F69">
    <property type="method" value="X-ray"/>
    <property type="resolution" value="1.17 A"/>
    <property type="chains" value="A=5-249"/>
</dbReference>
<dbReference type="PDB" id="9FFC">
    <property type="method" value="X-ray"/>
    <property type="resolution" value="1.25 A"/>
    <property type="chains" value="A=1-249"/>
</dbReference>
<dbReference type="PDBsum" id="1HTI"/>
<dbReference type="PDBsum" id="1KLG"/>
<dbReference type="PDBsum" id="1KLU"/>
<dbReference type="PDBsum" id="1WYI"/>
<dbReference type="PDBsum" id="2IAM"/>
<dbReference type="PDBsum" id="2IAN"/>
<dbReference type="PDBsum" id="2JK2"/>
<dbReference type="PDBsum" id="2VOM"/>
<dbReference type="PDBsum" id="4BR1"/>
<dbReference type="PDBsum" id="4E41"/>
<dbReference type="PDBsum" id="4POC"/>
<dbReference type="PDBsum" id="4POD"/>
<dbReference type="PDBsum" id="4UNK"/>
<dbReference type="PDBsum" id="4UNL"/>
<dbReference type="PDBsum" id="4ZVJ"/>
<dbReference type="PDBsum" id="6C2G"/>
<dbReference type="PDBsum" id="6D43"/>
<dbReference type="PDBsum" id="6NLH"/>
<dbReference type="PDBsum" id="6UP1"/>
<dbReference type="PDBsum" id="6UP5"/>
<dbReference type="PDBsum" id="6UP8"/>
<dbReference type="PDBsum" id="6UPF"/>
<dbReference type="PDBsum" id="7RDE"/>
<dbReference type="PDBsum" id="7SX1"/>
<dbReference type="PDBsum" id="7T0Q"/>
<dbReference type="PDBsum" id="7UXB"/>
<dbReference type="PDBsum" id="7UXV"/>
<dbReference type="PDBsum" id="9F69"/>
<dbReference type="PDBsum" id="9FFC"/>
<dbReference type="SMR" id="P60174"/>
<dbReference type="BioGRID" id="113020">
    <property type="interactions" value="289"/>
</dbReference>
<dbReference type="FunCoup" id="P60174">
    <property type="interactions" value="1479"/>
</dbReference>
<dbReference type="IntAct" id="P60174">
    <property type="interactions" value="61"/>
</dbReference>
<dbReference type="MINT" id="P60174"/>
<dbReference type="STRING" id="9606.ENSP00000229270"/>
<dbReference type="BindingDB" id="P60174"/>
<dbReference type="ChEMBL" id="CHEMBL4880"/>
<dbReference type="DrugBank" id="DB04447">
    <property type="generic name" value="1,4-Dithiothreitol"/>
</dbReference>
<dbReference type="DrugBank" id="DB03379">
    <property type="generic name" value="2-Carboxyethylphosphonic Acid"/>
</dbReference>
<dbReference type="DrugBank" id="DB02726">
    <property type="generic name" value="2-Phosphoglycolic Acid"/>
</dbReference>
<dbReference type="DrugBank" id="DB03132">
    <property type="generic name" value="3-(2-Benzothiazolylthio)-1-Propanesulfonic Acid"/>
</dbReference>
<dbReference type="DrugBank" id="DB07387">
    <property type="generic name" value="3-(BUTYLSULPHONYL)-PROPANOIC ACID"/>
</dbReference>
<dbReference type="DrugBank" id="DB04510">
    <property type="generic name" value="3-phospho-D-glyceric acid"/>
</dbReference>
<dbReference type="DrugBank" id="DB03314">
    <property type="generic name" value="5-fluorotryptophan"/>
</dbReference>
<dbReference type="DrugBank" id="DB03135">
    <property type="generic name" value="[2(Formyl-Hydroxy-Amino)-Ethyl]-Phosphonic Acid"/>
</dbReference>
<dbReference type="DrugBank" id="DB11638">
    <property type="generic name" value="Artenimol"/>
</dbReference>
<dbReference type="DrugBank" id="DB04326">
    <property type="generic name" value="Dihydroxyacetone phosphate"/>
</dbReference>
<dbReference type="DrugBank" id="DB01695">
    <property type="generic name" value="N-Hydroxy-4-phosphonobutanamide"/>
</dbReference>
<dbReference type="DrugBank" id="DB03026">
    <property type="generic name" value="Phosphoglycolohydroxamic Acid"/>
</dbReference>
<dbReference type="DrugBank" id="DB03900">
    <property type="generic name" value="tert-butanol"/>
</dbReference>
<dbReference type="DrugBank" id="DB01593">
    <property type="generic name" value="Zinc"/>
</dbReference>
<dbReference type="DrugBank" id="DB14487">
    <property type="generic name" value="Zinc acetate"/>
</dbReference>
<dbReference type="DrugBank" id="DB14533">
    <property type="generic name" value="Zinc chloride"/>
</dbReference>
<dbReference type="DrugBank" id="DB14548">
    <property type="generic name" value="Zinc sulfate, unspecified form"/>
</dbReference>
<dbReference type="MoonProt" id="P60174"/>
<dbReference type="GlyGen" id="P60174">
    <property type="glycosylation" value="1 site"/>
</dbReference>
<dbReference type="iPTMnet" id="P60174"/>
<dbReference type="MetOSite" id="P60174"/>
<dbReference type="PhosphoSitePlus" id="P60174"/>
<dbReference type="SwissPalm" id="P60174"/>
<dbReference type="BioMuta" id="TPI1"/>
<dbReference type="DMDM" id="353526311"/>
<dbReference type="REPRODUCTION-2DPAGE" id="IPI00797687"/>
<dbReference type="REPRODUCTION-2DPAGE" id="P60174"/>
<dbReference type="CPTAC" id="CPTAC-2780"/>
<dbReference type="jPOST" id="P60174"/>
<dbReference type="MassIVE" id="P60174"/>
<dbReference type="PaxDb" id="9606-ENSP00000229270"/>
<dbReference type="PeptideAtlas" id="P60174"/>
<dbReference type="PRIDE" id="P60174"/>
<dbReference type="ProteomicsDB" id="57186">
    <molecule id="P60174-3"/>
</dbReference>
<dbReference type="ProteomicsDB" id="57187">
    <molecule id="P60174-1"/>
</dbReference>
<dbReference type="ProteomicsDB" id="6680"/>
<dbReference type="Pumba" id="P60174"/>
<dbReference type="TopDownProteomics" id="P60174-1">
    <molecule id="P60174-1"/>
</dbReference>
<dbReference type="TopDownProteomics" id="P60174-3">
    <molecule id="P60174-3"/>
</dbReference>
<dbReference type="TopDownProteomics" id="P60174-4">
    <molecule id="P60174-4"/>
</dbReference>
<dbReference type="ABCD" id="P60174">
    <property type="antibodies" value="1 sequenced antibody"/>
</dbReference>
<dbReference type="Antibodypedia" id="22744">
    <property type="antibodies" value="472 antibodies from 36 providers"/>
</dbReference>
<dbReference type="DNASU" id="7167"/>
<dbReference type="Ensembl" id="ENST00000229270.8">
    <molecule id="P60174-3"/>
    <property type="protein sequence ID" value="ENSP00000229270.4"/>
    <property type="gene ID" value="ENSG00000111669.15"/>
</dbReference>
<dbReference type="Ensembl" id="ENST00000396705.10">
    <molecule id="P60174-1"/>
    <property type="protein sequence ID" value="ENSP00000379933.4"/>
    <property type="gene ID" value="ENSG00000111669.15"/>
</dbReference>
<dbReference type="Ensembl" id="ENST00000488464.6">
    <molecule id="P60174-4"/>
    <property type="protein sequence ID" value="ENSP00000475620.1"/>
    <property type="gene ID" value="ENSG00000111669.15"/>
</dbReference>
<dbReference type="Ensembl" id="ENST00000535434.5">
    <molecule id="P60174-4"/>
    <property type="protein sequence ID" value="ENSP00000443599.1"/>
    <property type="gene ID" value="ENSG00000111669.15"/>
</dbReference>
<dbReference type="Ensembl" id="ENST00000613953.4">
    <molecule id="P60174-3"/>
    <property type="protein sequence ID" value="ENSP00000484435.1"/>
    <property type="gene ID" value="ENSG00000111669.15"/>
</dbReference>
<dbReference type="GeneID" id="7167"/>
<dbReference type="KEGG" id="hsa:7167"/>
<dbReference type="MANE-Select" id="ENST00000396705.10">
    <property type="protein sequence ID" value="ENSP00000379933.4"/>
    <property type="RefSeq nucleotide sequence ID" value="NM_000365.6"/>
    <property type="RefSeq protein sequence ID" value="NP_000356.1"/>
</dbReference>
<dbReference type="UCSC" id="uc001qrk.5">
    <molecule id="P60174-1"/>
    <property type="organism name" value="human"/>
</dbReference>
<dbReference type="AGR" id="HGNC:12009"/>
<dbReference type="CTD" id="7167"/>
<dbReference type="DisGeNET" id="7167"/>
<dbReference type="GeneCards" id="TPI1"/>
<dbReference type="HGNC" id="HGNC:12009">
    <property type="gene designation" value="TPI1"/>
</dbReference>
<dbReference type="HPA" id="ENSG00000111669">
    <property type="expression patterns" value="Tissue enhanced (skeletal)"/>
</dbReference>
<dbReference type="MalaCards" id="TPI1"/>
<dbReference type="MIM" id="190450">
    <property type="type" value="gene"/>
</dbReference>
<dbReference type="MIM" id="615512">
    <property type="type" value="phenotype"/>
</dbReference>
<dbReference type="neXtProt" id="NX_P60174"/>
<dbReference type="OpenTargets" id="ENSG00000111669"/>
<dbReference type="Orphanet" id="868">
    <property type="disease" value="Triose phosphate-isomerase deficiency"/>
</dbReference>
<dbReference type="PharmGKB" id="PA36689"/>
<dbReference type="VEuPathDB" id="HostDB:ENSG00000111669"/>
<dbReference type="eggNOG" id="KOG1643">
    <property type="taxonomic scope" value="Eukaryota"/>
</dbReference>
<dbReference type="GeneTree" id="ENSGT00390000013354"/>
<dbReference type="HOGENOM" id="CLU_024251_2_0_1"/>
<dbReference type="InParanoid" id="P60174"/>
<dbReference type="OrthoDB" id="9472880at2759"/>
<dbReference type="PAN-GO" id="P60174">
    <property type="GO annotations" value="6 GO annotations based on evolutionary models"/>
</dbReference>
<dbReference type="PhylomeDB" id="P60174"/>
<dbReference type="TreeFam" id="TF300829"/>
<dbReference type="BioCyc" id="MetaCyc:HS03441-MONOMER"/>
<dbReference type="BRENDA" id="5.3.1.1">
    <property type="organism ID" value="2681"/>
</dbReference>
<dbReference type="PathwayCommons" id="P60174"/>
<dbReference type="Reactome" id="R-HSA-70171">
    <property type="pathway name" value="Glycolysis"/>
</dbReference>
<dbReference type="Reactome" id="R-HSA-70263">
    <property type="pathway name" value="Gluconeogenesis"/>
</dbReference>
<dbReference type="SABIO-RK" id="P60174"/>
<dbReference type="SignaLink" id="P60174"/>
<dbReference type="SIGNOR" id="P60174"/>
<dbReference type="UniPathway" id="UPA00109">
    <property type="reaction ID" value="UER00189"/>
</dbReference>
<dbReference type="UniPathway" id="UPA00138"/>
<dbReference type="BioGRID-ORCS" id="7167">
    <property type="hits" value="580 hits in 1183 CRISPR screens"/>
</dbReference>
<dbReference type="CD-CODE" id="FB4E32DD">
    <property type="entry name" value="Presynaptic clusters and postsynaptic densities"/>
</dbReference>
<dbReference type="ChiTaRS" id="TPI1">
    <property type="organism name" value="human"/>
</dbReference>
<dbReference type="EvolutionaryTrace" id="P60174"/>
<dbReference type="GeneWiki" id="TPI1"/>
<dbReference type="GenomeRNAi" id="7167"/>
<dbReference type="Pharos" id="P60174">
    <property type="development level" value="Tbio"/>
</dbReference>
<dbReference type="PRO" id="PR:P60174"/>
<dbReference type="Proteomes" id="UP000005640">
    <property type="component" value="Chromosome 12"/>
</dbReference>
<dbReference type="RNAct" id="P60174">
    <property type="molecule type" value="protein"/>
</dbReference>
<dbReference type="Bgee" id="ENSG00000111669">
    <property type="expression patterns" value="Expressed in right frontal lobe and 211 other cell types or tissues"/>
</dbReference>
<dbReference type="ExpressionAtlas" id="P60174">
    <property type="expression patterns" value="baseline and differential"/>
</dbReference>
<dbReference type="GO" id="GO:0005829">
    <property type="term" value="C:cytosol"/>
    <property type="evidence" value="ECO:0000318"/>
    <property type="project" value="GO_Central"/>
</dbReference>
<dbReference type="GO" id="GO:0070062">
    <property type="term" value="C:extracellular exosome"/>
    <property type="evidence" value="ECO:0007005"/>
    <property type="project" value="UniProtKB"/>
</dbReference>
<dbReference type="GO" id="GO:0005615">
    <property type="term" value="C:extracellular space"/>
    <property type="evidence" value="ECO:0007005"/>
    <property type="project" value="UniProtKB"/>
</dbReference>
<dbReference type="GO" id="GO:0005634">
    <property type="term" value="C:nucleus"/>
    <property type="evidence" value="ECO:0007005"/>
    <property type="project" value="UniProtKB"/>
</dbReference>
<dbReference type="GO" id="GO:0008929">
    <property type="term" value="F:methylglyoxal synthase activity"/>
    <property type="evidence" value="ECO:0000250"/>
    <property type="project" value="UniProtKB"/>
</dbReference>
<dbReference type="GO" id="GO:0042803">
    <property type="term" value="F:protein homodimerization activity"/>
    <property type="evidence" value="ECO:0000314"/>
    <property type="project" value="UniProtKB"/>
</dbReference>
<dbReference type="GO" id="GO:0004807">
    <property type="term" value="F:triose-phosphate isomerase activity"/>
    <property type="evidence" value="ECO:0000314"/>
    <property type="project" value="UniProtKB"/>
</dbReference>
<dbReference type="GO" id="GO:0031625">
    <property type="term" value="F:ubiquitin protein ligase binding"/>
    <property type="evidence" value="ECO:0000353"/>
    <property type="project" value="ParkinsonsUK-UCL"/>
</dbReference>
<dbReference type="GO" id="GO:0061621">
    <property type="term" value="P:canonical glycolysis"/>
    <property type="evidence" value="ECO:0007669"/>
    <property type="project" value="Ensembl"/>
</dbReference>
<dbReference type="GO" id="GO:0006094">
    <property type="term" value="P:gluconeogenesis"/>
    <property type="evidence" value="ECO:0000318"/>
    <property type="project" value="GO_Central"/>
</dbReference>
<dbReference type="GO" id="GO:0046166">
    <property type="term" value="P:glyceraldehyde-3-phosphate biosynthetic process"/>
    <property type="evidence" value="ECO:0000314"/>
    <property type="project" value="UniProtKB"/>
</dbReference>
<dbReference type="GO" id="GO:0019563">
    <property type="term" value="P:glycerol catabolic process"/>
    <property type="evidence" value="ECO:0000318"/>
    <property type="project" value="GO_Central"/>
</dbReference>
<dbReference type="GO" id="GO:0006096">
    <property type="term" value="P:glycolytic process"/>
    <property type="evidence" value="ECO:0000318"/>
    <property type="project" value="GO_Central"/>
</dbReference>
<dbReference type="GO" id="GO:0019242">
    <property type="term" value="P:methylglyoxal biosynthetic process"/>
    <property type="evidence" value="ECO:0000250"/>
    <property type="project" value="UniProtKB"/>
</dbReference>
<dbReference type="CDD" id="cd00311">
    <property type="entry name" value="TIM"/>
    <property type="match status" value="1"/>
</dbReference>
<dbReference type="FunFam" id="3.20.20.70:FF:000025">
    <property type="entry name" value="Triosephosphate isomerase"/>
    <property type="match status" value="1"/>
</dbReference>
<dbReference type="Gene3D" id="3.20.20.70">
    <property type="entry name" value="Aldolase class I"/>
    <property type="match status" value="1"/>
</dbReference>
<dbReference type="HAMAP" id="MF_00147_B">
    <property type="entry name" value="TIM_B"/>
    <property type="match status" value="1"/>
</dbReference>
<dbReference type="InterPro" id="IPR013785">
    <property type="entry name" value="Aldolase_TIM"/>
</dbReference>
<dbReference type="InterPro" id="IPR035990">
    <property type="entry name" value="TIM_sf"/>
</dbReference>
<dbReference type="InterPro" id="IPR022896">
    <property type="entry name" value="TrioseP_Isoase_bac/euk"/>
</dbReference>
<dbReference type="InterPro" id="IPR000652">
    <property type="entry name" value="Triosephosphate_isomerase"/>
</dbReference>
<dbReference type="InterPro" id="IPR020861">
    <property type="entry name" value="Triosephosphate_isomerase_AS"/>
</dbReference>
<dbReference type="NCBIfam" id="TIGR00419">
    <property type="entry name" value="tim"/>
    <property type="match status" value="1"/>
</dbReference>
<dbReference type="PANTHER" id="PTHR21139">
    <property type="entry name" value="TRIOSEPHOSPHATE ISOMERASE"/>
    <property type="match status" value="1"/>
</dbReference>
<dbReference type="PANTHER" id="PTHR21139:SF2">
    <property type="entry name" value="TRIOSEPHOSPHATE ISOMERASE"/>
    <property type="match status" value="1"/>
</dbReference>
<dbReference type="Pfam" id="PF00121">
    <property type="entry name" value="TIM"/>
    <property type="match status" value="1"/>
</dbReference>
<dbReference type="SUPFAM" id="SSF51351">
    <property type="entry name" value="Triosephosphate isomerase (TIM)"/>
    <property type="match status" value="1"/>
</dbReference>
<dbReference type="PROSITE" id="PS00171">
    <property type="entry name" value="TIM_1"/>
    <property type="match status" value="1"/>
</dbReference>
<dbReference type="PROSITE" id="PS51440">
    <property type="entry name" value="TIM_2"/>
    <property type="match status" value="1"/>
</dbReference>
<proteinExistence type="evidence at protein level"/>
<evidence type="ECO:0000250" key="1">
    <source>
        <dbReference type="UniProtKB" id="P00939"/>
    </source>
</evidence>
<evidence type="ECO:0000250" key="2">
    <source>
        <dbReference type="UniProtKB" id="P17751"/>
    </source>
</evidence>
<evidence type="ECO:0000250" key="3">
    <source>
        <dbReference type="UniProtKB" id="P48500"/>
    </source>
</evidence>
<evidence type="ECO:0000255" key="4">
    <source>
        <dbReference type="PROSITE-ProRule" id="PRU10127"/>
    </source>
</evidence>
<evidence type="ECO:0000269" key="5">
    <source>
    </source>
</evidence>
<evidence type="ECO:0000269" key="6">
    <source>
    </source>
</evidence>
<evidence type="ECO:0000269" key="7">
    <source>
    </source>
</evidence>
<evidence type="ECO:0000269" key="8">
    <source>
    </source>
</evidence>
<evidence type="ECO:0000269" key="9">
    <source>
    </source>
</evidence>
<evidence type="ECO:0000269" key="10">
    <source>
    </source>
</evidence>
<evidence type="ECO:0000269" key="11">
    <source>
    </source>
</evidence>
<evidence type="ECO:0000269" key="12">
    <source ref="37"/>
</evidence>
<evidence type="ECO:0000305" key="13"/>
<evidence type="ECO:0000305" key="14">
    <source>
    </source>
</evidence>
<evidence type="ECO:0007744" key="15">
    <source>
    </source>
</evidence>
<evidence type="ECO:0007744" key="16">
    <source>
    </source>
</evidence>
<evidence type="ECO:0007744" key="17">
    <source>
    </source>
</evidence>
<evidence type="ECO:0007744" key="18">
    <source>
    </source>
</evidence>
<evidence type="ECO:0007744" key="19">
    <source>
    </source>
</evidence>
<evidence type="ECO:0007744" key="20">
    <source>
    </source>
</evidence>
<evidence type="ECO:0007744" key="21">
    <source>
    </source>
</evidence>
<evidence type="ECO:0007744" key="22">
    <source>
    </source>
</evidence>
<evidence type="ECO:0007744" key="23">
    <source>
    </source>
</evidence>
<evidence type="ECO:0007744" key="24">
    <source>
    </source>
</evidence>
<evidence type="ECO:0007744" key="25">
    <source>
    </source>
</evidence>
<evidence type="ECO:0007744" key="26">
    <source>
    </source>
</evidence>
<evidence type="ECO:0007744" key="27">
    <source>
    </source>
</evidence>
<evidence type="ECO:0007744" key="28">
    <source>
    </source>
</evidence>
<evidence type="ECO:0007829" key="29">
    <source>
        <dbReference type="PDB" id="4UNL"/>
    </source>
</evidence>
<evidence type="ECO:0007829" key="30">
    <source>
        <dbReference type="PDB" id="6UP8"/>
    </source>
</evidence>
<evidence type="ECO:0007829" key="31">
    <source>
        <dbReference type="PDB" id="7RDE"/>
    </source>
</evidence>
<accession>P60174</accession>
<accession>B7Z5D8</accession>
<accession>D3DUS9</accession>
<accession>P00938</accession>
<accession>Q6FHP9</accession>
<accession>Q6IS07</accession>
<accession>Q8WWD0</accession>
<accession>Q96AG5</accession>
<comment type="function">
    <text evidence="6">Triosephosphate isomerase is an extremely efficient metabolic enzyme that catalyzes the interconversion between dihydroxyacetone phosphate (DHAP) and D-glyceraldehyde-3-phosphate (G3P) in glycolysis and gluconeogenesis.</text>
</comment>
<comment type="function">
    <text evidence="1">It is also responsible for the non-negligible production of methylglyoxal a reactive cytotoxic side-product that modifies and can alter proteins, DNA and lipids.</text>
</comment>
<comment type="catalytic activity">
    <reaction evidence="6">
        <text>D-glyceraldehyde 3-phosphate = dihydroxyacetone phosphate</text>
        <dbReference type="Rhea" id="RHEA:18585"/>
        <dbReference type="ChEBI" id="CHEBI:57642"/>
        <dbReference type="ChEBI" id="CHEBI:59776"/>
        <dbReference type="EC" id="5.3.1.1"/>
    </reaction>
</comment>
<comment type="catalytic activity">
    <reaction evidence="1">
        <text>dihydroxyacetone phosphate = methylglyoxal + phosphate</text>
        <dbReference type="Rhea" id="RHEA:17937"/>
        <dbReference type="ChEBI" id="CHEBI:17158"/>
        <dbReference type="ChEBI" id="CHEBI:43474"/>
        <dbReference type="ChEBI" id="CHEBI:57642"/>
        <dbReference type="EC" id="4.2.3.3"/>
    </reaction>
</comment>
<comment type="biophysicochemical properties">
    <kinetics>
        <KM evidence="6">0.74 mM for D-glyceraldehyde 3-phosphate (at pH 7.4 and 25 degrees Celsius)</KM>
        <Vmax evidence="6">7.1 mmol/min/mg enzyme</Vmax>
    </kinetics>
</comment>
<comment type="pathway">
    <text evidence="4">Carbohydrate degradation; glycolysis; D-glyceraldehyde 3-phosphate from glycerone phosphate: step 1/1.</text>
</comment>
<comment type="pathway">
    <text evidence="4">Carbohydrate biosynthesis; gluconeogenesis.</text>
</comment>
<comment type="subunit">
    <text evidence="4 6 8">Homodimer.</text>
</comment>
<comment type="interaction">
    <interactant intactId="EBI-717475">
        <id>P60174</id>
    </interactant>
    <interactant intactId="EBI-466029">
        <id>P42858</id>
        <label>HTT</label>
    </interactant>
    <organismsDiffer>false</organismsDiffer>
    <experiments>6</experiments>
</comment>
<comment type="interaction">
    <interactant intactId="EBI-717475">
        <id>P60174</id>
    </interactant>
    <interactant intactId="EBI-358311">
        <id>P12004</id>
        <label>PCNA</label>
    </interactant>
    <organismsDiffer>false</organismsDiffer>
    <experiments>2</experiments>
</comment>
<comment type="interaction">
    <interactant intactId="EBI-717475">
        <id>P60174</id>
    </interactant>
    <interactant intactId="EBI-710997">
        <id>P54274</id>
        <label>TERF1</label>
    </interactant>
    <organismsDiffer>false</organismsDiffer>
    <experiments>2</experiments>
</comment>
<comment type="subcellular location">
    <subcellularLocation>
        <location evidence="4">Cytoplasm</location>
    </subcellularLocation>
</comment>
<comment type="alternative products">
    <event type="alternative promoter"/>
    <event type="alternative splicing"/>
    <isoform>
        <id>P60174-1</id>
        <name>1</name>
        <sequence type="displayed"/>
    </isoform>
    <isoform>
        <id>P60174-3</id>
        <name>2</name>
        <sequence type="described" ref="VSP_060722"/>
    </isoform>
    <isoform>
        <id>P60174-4</id>
        <name>3</name>
        <sequence type="described" ref="VSP_060721"/>
    </isoform>
</comment>
<comment type="disease" evidence="7 9 10 11 12">
    <disease id="DI-02390">
        <name>Triosephosphate isomerase deficiency</name>
        <acronym>TPID</acronym>
        <description>An autosomal recessive multisystem disorder characterized by congenital hemolytic anemia, progressive neuromuscular dysfunction, susceptibility to bacterial infection, and cardiomyopathy.</description>
        <dbReference type="MIM" id="615512"/>
    </disease>
    <text>The disease is caused by variants affecting the gene represented in this entry.</text>
</comment>
<comment type="miscellaneous">
    <molecule>Isoform 3</molecule>
    <text evidence="13">Produced by alternative splicing.</text>
</comment>
<comment type="similarity">
    <text evidence="13">Belongs to the triosephosphate isomerase family.</text>
</comment>
<comment type="sequence caution" evidence="13">
    <conflict type="miscellaneous discrepancy">
        <sequence resource="EMBL-CDS" id="AAH70129"/>
    </conflict>
    <text>Sequence differs at the C-terminus.</text>
</comment>
<comment type="online information" name="Wikipedia">
    <link uri="https://en.wikipedia.org/wiki/Triosephosphate_isomerase"/>
    <text>Triosephosphate isomerase entry</text>
</comment>
<protein>
    <recommendedName>
        <fullName evidence="14">Triosephosphate isomerase</fullName>
        <shortName>TIM</shortName>
        <ecNumber evidence="6">5.3.1.1</ecNumber>
    </recommendedName>
    <alternativeName>
        <fullName evidence="1">Methylglyoxal synthase</fullName>
        <ecNumber evidence="1">4.2.3.3</ecNumber>
    </alternativeName>
    <alternativeName>
        <fullName>Triose-phosphate isomerase</fullName>
    </alternativeName>
</protein>